<comment type="function">
    <text evidence="1">Presents moderate hemolytic activity at physiological concentrations (micromolar range). Does not induce mast cell degranulation, lactate dehydrogenase (LDH) release from mast cells and antimicrobial effects. In vivo, injection into mice induces increase in nociceptive sensibility, but causes very reduced or no edema formation. It also causes no alteration in rearing (standing on hind limbs), but does not impact locomotion.</text>
</comment>
<comment type="subcellular location">
    <subcellularLocation>
        <location evidence="1">Secreted</location>
    </subcellularLocation>
</comment>
<comment type="tissue specificity">
    <text evidence="3">Expressed by the venom gland.</text>
</comment>
<comment type="mass spectrometry"/>
<evidence type="ECO:0000269" key="1">
    <source>
    </source>
</evidence>
<evidence type="ECO:0000303" key="2">
    <source>
    </source>
</evidence>
<evidence type="ECO:0000305" key="3">
    <source>
    </source>
</evidence>
<protein>
    <recommendedName>
        <fullName evidence="2">Cryptide Pep-10</fullName>
    </recommendedName>
</protein>
<proteinExistence type="evidence at protein level"/>
<accession>P0DRF5</accession>
<keyword id="KW-0204">Cytolysis</keyword>
<keyword id="KW-0903">Direct protein sequencing</keyword>
<keyword id="KW-0964">Secreted</keyword>
<sequence>SESNTCG</sequence>
<dbReference type="GO" id="GO:0005576">
    <property type="term" value="C:extracellular region"/>
    <property type="evidence" value="ECO:0007669"/>
    <property type="project" value="UniProtKB-SubCell"/>
</dbReference>
<dbReference type="GO" id="GO:0031640">
    <property type="term" value="P:killing of cells of another organism"/>
    <property type="evidence" value="ECO:0007669"/>
    <property type="project" value="UniProtKB-KW"/>
</dbReference>
<feature type="peptide" id="PRO_0000461745" description="Cryptide Pep-10" evidence="1">
    <location>
        <begin position="1"/>
        <end position="7"/>
    </location>
</feature>
<organism>
    <name type="scientific">Tityus obscurus</name>
    <name type="common">Amazonian scorpion</name>
    <name type="synonym">Tityus cambridgei</name>
    <dbReference type="NCBI Taxonomy" id="1221240"/>
    <lineage>
        <taxon>Eukaryota</taxon>
        <taxon>Metazoa</taxon>
        <taxon>Ecdysozoa</taxon>
        <taxon>Arthropoda</taxon>
        <taxon>Chelicerata</taxon>
        <taxon>Arachnida</taxon>
        <taxon>Scorpiones</taxon>
        <taxon>Buthida</taxon>
        <taxon>Buthoidea</taxon>
        <taxon>Buthidae</taxon>
        <taxon>Tityus</taxon>
    </lineage>
</organism>
<name>CRY10_TITOB</name>
<reference key="1">
    <citation type="journal article" date="2018" name="J. Proteomics">
        <title>Profiling the short, linear, non-disulfide bond-containing peptidome from the venom of the scorpion Tityus obscurus.</title>
        <authorList>
            <person name="Dias N.B."/>
            <person name="de Souza B.M."/>
            <person name="Cocchi F.K."/>
            <person name="Chalkidis H.M."/>
            <person name="Dorce V.A.C."/>
            <person name="Palma M.S."/>
        </authorList>
    </citation>
    <scope>PROTEIN SEQUENCE</scope>
    <scope>IDENTIFICATION BY MASS SPECTROMETRY</scope>
    <scope>MASS SPECTROMETRY</scope>
    <scope>SUBCELLULAR LOCATION</scope>
    <scope>SYNTHESIS</scope>
    <scope>FUNCTION</scope>
    <scope>BIOASSAY</scope>
    <source>
        <tissue>Venom</tissue>
    </source>
</reference>